<accession>C1PGW0</accession>
<dbReference type="EMBL" id="AB377514">
    <property type="protein sequence ID" value="BAH57853.1"/>
    <property type="molecule type" value="mRNA"/>
</dbReference>
<dbReference type="GO" id="GO:0005576">
    <property type="term" value="C:extracellular region"/>
    <property type="evidence" value="ECO:0007669"/>
    <property type="project" value="UniProtKB-KW"/>
</dbReference>
<dbReference type="GO" id="GO:0009505">
    <property type="term" value="C:plant-type cell wall"/>
    <property type="evidence" value="ECO:0000314"/>
    <property type="project" value="UniProtKB"/>
</dbReference>
<dbReference type="GO" id="GO:0005886">
    <property type="term" value="C:plasma membrane"/>
    <property type="evidence" value="ECO:0000314"/>
    <property type="project" value="UniProtKB"/>
</dbReference>
<dbReference type="GO" id="GO:0044568">
    <property type="term" value="C:secondary cell wall cellulose synthase complex"/>
    <property type="evidence" value="ECO:0000250"/>
    <property type="project" value="UniProtKB"/>
</dbReference>
<dbReference type="GO" id="GO:0071555">
    <property type="term" value="P:cell wall organization"/>
    <property type="evidence" value="ECO:0007669"/>
    <property type="project" value="UniProtKB-KW"/>
</dbReference>
<dbReference type="GO" id="GO:0009834">
    <property type="term" value="P:plant-type secondary cell wall biogenesis"/>
    <property type="evidence" value="ECO:0007669"/>
    <property type="project" value="InterPro"/>
</dbReference>
<dbReference type="GO" id="GO:2000652">
    <property type="term" value="P:regulation of secondary cell wall biogenesis"/>
    <property type="evidence" value="ECO:0000315"/>
    <property type="project" value="UniProtKB"/>
</dbReference>
<dbReference type="GO" id="GO:1905177">
    <property type="term" value="P:tracheary element differentiation"/>
    <property type="evidence" value="ECO:0000315"/>
    <property type="project" value="UniProtKB"/>
</dbReference>
<dbReference type="InterPro" id="IPR044950">
    <property type="entry name" value="TED6/7"/>
</dbReference>
<dbReference type="PANTHER" id="PTHR35697">
    <property type="entry name" value="OS08G0108300 PROTEIN"/>
    <property type="match status" value="1"/>
</dbReference>
<dbReference type="PANTHER" id="PTHR35697:SF1">
    <property type="entry name" value="PROTEIN TRACHEARY ELEMENT DIFFERENTIATION-RELATED 7"/>
    <property type="match status" value="1"/>
</dbReference>
<keyword id="KW-1003">Cell membrane</keyword>
<keyword id="KW-0134">Cell wall</keyword>
<keyword id="KW-0961">Cell wall biogenesis/degradation</keyword>
<keyword id="KW-0217">Developmental protein</keyword>
<keyword id="KW-0472">Membrane</keyword>
<keyword id="KW-0964">Secreted</keyword>
<keyword id="KW-0812">Transmembrane</keyword>
<keyword id="KW-1133">Transmembrane helix</keyword>
<protein>
    <recommendedName>
        <fullName evidence="4">Protein TRACHEARY ELEMENT DIFFERENTIATION-RELATED 6</fullName>
    </recommendedName>
</protein>
<gene>
    <name evidence="4" type="primary">TED6</name>
</gene>
<evidence type="ECO:0000250" key="1">
    <source>
        <dbReference type="UniProtKB" id="Q8LBX7"/>
    </source>
</evidence>
<evidence type="ECO:0000255" key="2"/>
<evidence type="ECO:0000269" key="3">
    <source>
    </source>
</evidence>
<evidence type="ECO:0000303" key="4">
    <source>
    </source>
</evidence>
<evidence type="ECO:0000305" key="5"/>
<name>TED6_ZINEL</name>
<reference key="1">
    <citation type="journal article" date="2009" name="Plant Cell">
        <title>Identifying new components participating in the secondary cell wall formation of vessel elements in zinnia and Arabidopsis.</title>
        <authorList>
            <person name="Endo S."/>
            <person name="Pesquet E."/>
            <person name="Yamaguchi M."/>
            <person name="Tashiro G."/>
            <person name="Sato M."/>
            <person name="Toyooka K."/>
            <person name="Nishikubo N."/>
            <person name="Udagawa-Motose M."/>
            <person name="Kubo M."/>
            <person name="Fukuda H."/>
            <person name="Demura T."/>
        </authorList>
    </citation>
    <scope>NUCLEOTIDE SEQUENCE [MRNA]</scope>
    <scope>FUNCTION</scope>
    <scope>DISRUPTION PHENOTYPE</scope>
    <scope>TISSUE SPECIFICITY</scope>
    <scope>SUBCELLULAR LOCATION</scope>
    <source>
        <strain>cv. Canary Bird</strain>
    </source>
</reference>
<sequence>MATIFIVFVSFGCVFVLGIAAFVLCCLIKKWKCSKAIEKNEMVHVDQHLQVHENILQGPNGMKTVAITVDDDLHVHDEEECVKNEKLGTASTSKA</sequence>
<comment type="function">
    <text evidence="3">Involved in the secondary cell wall (SCW) formation of vessel elements (e.g. protoxylem and metaxylem), thus promoting tracheary element (TE) differentiation.</text>
</comment>
<comment type="subunit">
    <text evidence="1">Interacts with the secondary cell wall (SCW)-related cellulose synthase complex.</text>
</comment>
<comment type="subcellular location">
    <subcellularLocation>
        <location evidence="3">Cell membrane</location>
        <topology evidence="2">Single-pass membrane protein</topology>
    </subcellularLocation>
    <subcellularLocation>
        <location evidence="3">Secreted</location>
        <location evidence="3">Cell wall</location>
    </subcellularLocation>
</comment>
<comment type="tissue specificity">
    <text evidence="3">Accumulates in cells differentiating into tracheary element (TE) which undergo secondary cell wall (SCW) formation.</text>
</comment>
<comment type="disruption phenotype">
    <text evidence="3">Delayed secondary cell wall (SCW) formation during tracheary element (TE) differentiation.</text>
</comment>
<proteinExistence type="evidence at transcript level"/>
<feature type="chain" id="PRO_0000448737" description="Protein TRACHEARY ELEMENT DIFFERENTIATION-RELATED 6">
    <location>
        <begin position="1"/>
        <end position="95"/>
    </location>
</feature>
<feature type="topological domain" description="Extracellular" evidence="5">
    <location>
        <begin position="1"/>
        <end position="3"/>
    </location>
</feature>
<feature type="transmembrane region" description="Helical" evidence="2">
    <location>
        <begin position="4"/>
        <end position="24"/>
    </location>
</feature>
<feature type="topological domain" description="Cytoplasmic" evidence="5">
    <location>
        <begin position="25"/>
        <end position="95"/>
    </location>
</feature>
<organism>
    <name type="scientific">Zinnia elegans</name>
    <name type="common">Garden zinnia</name>
    <name type="synonym">Zinnia violacea</name>
    <dbReference type="NCBI Taxonomy" id="34245"/>
    <lineage>
        <taxon>Eukaryota</taxon>
        <taxon>Viridiplantae</taxon>
        <taxon>Streptophyta</taxon>
        <taxon>Embryophyta</taxon>
        <taxon>Tracheophyta</taxon>
        <taxon>Spermatophyta</taxon>
        <taxon>Magnoliopsida</taxon>
        <taxon>eudicotyledons</taxon>
        <taxon>Gunneridae</taxon>
        <taxon>Pentapetalae</taxon>
        <taxon>asterids</taxon>
        <taxon>campanulids</taxon>
        <taxon>Asterales</taxon>
        <taxon>Asteraceae</taxon>
        <taxon>Asteroideae</taxon>
        <taxon>Heliantheae alliance</taxon>
        <taxon>Heliantheae</taxon>
        <taxon>Zinnia</taxon>
    </lineage>
</organism>